<reference key="1">
    <citation type="journal article" date="1997" name="Nature">
        <title>The complete genome sequence of the Gram-positive bacterium Bacillus subtilis.</title>
        <authorList>
            <person name="Kunst F."/>
            <person name="Ogasawara N."/>
            <person name="Moszer I."/>
            <person name="Albertini A.M."/>
            <person name="Alloni G."/>
            <person name="Azevedo V."/>
            <person name="Bertero M.G."/>
            <person name="Bessieres P."/>
            <person name="Bolotin A."/>
            <person name="Borchert S."/>
            <person name="Borriss R."/>
            <person name="Boursier L."/>
            <person name="Brans A."/>
            <person name="Braun M."/>
            <person name="Brignell S.C."/>
            <person name="Bron S."/>
            <person name="Brouillet S."/>
            <person name="Bruschi C.V."/>
            <person name="Caldwell B."/>
            <person name="Capuano V."/>
            <person name="Carter N.M."/>
            <person name="Choi S.-K."/>
            <person name="Codani J.-J."/>
            <person name="Connerton I.F."/>
            <person name="Cummings N.J."/>
            <person name="Daniel R.A."/>
            <person name="Denizot F."/>
            <person name="Devine K.M."/>
            <person name="Duesterhoeft A."/>
            <person name="Ehrlich S.D."/>
            <person name="Emmerson P.T."/>
            <person name="Entian K.-D."/>
            <person name="Errington J."/>
            <person name="Fabret C."/>
            <person name="Ferrari E."/>
            <person name="Foulger D."/>
            <person name="Fritz C."/>
            <person name="Fujita M."/>
            <person name="Fujita Y."/>
            <person name="Fuma S."/>
            <person name="Galizzi A."/>
            <person name="Galleron N."/>
            <person name="Ghim S.-Y."/>
            <person name="Glaser P."/>
            <person name="Goffeau A."/>
            <person name="Golightly E.J."/>
            <person name="Grandi G."/>
            <person name="Guiseppi G."/>
            <person name="Guy B.J."/>
            <person name="Haga K."/>
            <person name="Haiech J."/>
            <person name="Harwood C.R."/>
            <person name="Henaut A."/>
            <person name="Hilbert H."/>
            <person name="Holsappel S."/>
            <person name="Hosono S."/>
            <person name="Hullo M.-F."/>
            <person name="Itaya M."/>
            <person name="Jones L.-M."/>
            <person name="Joris B."/>
            <person name="Karamata D."/>
            <person name="Kasahara Y."/>
            <person name="Klaerr-Blanchard M."/>
            <person name="Klein C."/>
            <person name="Kobayashi Y."/>
            <person name="Koetter P."/>
            <person name="Koningstein G."/>
            <person name="Krogh S."/>
            <person name="Kumano M."/>
            <person name="Kurita K."/>
            <person name="Lapidus A."/>
            <person name="Lardinois S."/>
            <person name="Lauber J."/>
            <person name="Lazarevic V."/>
            <person name="Lee S.-M."/>
            <person name="Levine A."/>
            <person name="Liu H."/>
            <person name="Masuda S."/>
            <person name="Mauel C."/>
            <person name="Medigue C."/>
            <person name="Medina N."/>
            <person name="Mellado R.P."/>
            <person name="Mizuno M."/>
            <person name="Moestl D."/>
            <person name="Nakai S."/>
            <person name="Noback M."/>
            <person name="Noone D."/>
            <person name="O'Reilly M."/>
            <person name="Ogawa K."/>
            <person name="Ogiwara A."/>
            <person name="Oudega B."/>
            <person name="Park S.-H."/>
            <person name="Parro V."/>
            <person name="Pohl T.M."/>
            <person name="Portetelle D."/>
            <person name="Porwollik S."/>
            <person name="Prescott A.M."/>
            <person name="Presecan E."/>
            <person name="Pujic P."/>
            <person name="Purnelle B."/>
            <person name="Rapoport G."/>
            <person name="Rey M."/>
            <person name="Reynolds S."/>
            <person name="Rieger M."/>
            <person name="Rivolta C."/>
            <person name="Rocha E."/>
            <person name="Roche B."/>
            <person name="Rose M."/>
            <person name="Sadaie Y."/>
            <person name="Sato T."/>
            <person name="Scanlan E."/>
            <person name="Schleich S."/>
            <person name="Schroeter R."/>
            <person name="Scoffone F."/>
            <person name="Sekiguchi J."/>
            <person name="Sekowska A."/>
            <person name="Seror S.J."/>
            <person name="Serror P."/>
            <person name="Shin B.-S."/>
            <person name="Soldo B."/>
            <person name="Sorokin A."/>
            <person name="Tacconi E."/>
            <person name="Takagi T."/>
            <person name="Takahashi H."/>
            <person name="Takemaru K."/>
            <person name="Takeuchi M."/>
            <person name="Tamakoshi A."/>
            <person name="Tanaka T."/>
            <person name="Terpstra P."/>
            <person name="Tognoni A."/>
            <person name="Tosato V."/>
            <person name="Uchiyama S."/>
            <person name="Vandenbol M."/>
            <person name="Vannier F."/>
            <person name="Vassarotti A."/>
            <person name="Viari A."/>
            <person name="Wambutt R."/>
            <person name="Wedler E."/>
            <person name="Wedler H."/>
            <person name="Weitzenegger T."/>
            <person name="Winters P."/>
            <person name="Wipat A."/>
            <person name="Yamamoto H."/>
            <person name="Yamane K."/>
            <person name="Yasumoto K."/>
            <person name="Yata K."/>
            <person name="Yoshida K."/>
            <person name="Yoshikawa H.-F."/>
            <person name="Zumstein E."/>
            <person name="Yoshikawa H."/>
            <person name="Danchin A."/>
        </authorList>
    </citation>
    <scope>NUCLEOTIDE SEQUENCE [LARGE SCALE GENOMIC DNA]</scope>
    <source>
        <strain>168</strain>
    </source>
</reference>
<reference key="2">
    <citation type="journal article" date="2003" name="J. Bacteriol.">
        <title>KtrAB and KtrCD: two K+ uptake systems in Bacillus subtilis and their role in adaptation to hypertonicity.</title>
        <authorList>
            <person name="Holtmann G."/>
            <person name="Bakker E.P."/>
            <person name="Uozumi N."/>
            <person name="Bremer E."/>
        </authorList>
    </citation>
    <scope>FUNCTION</scope>
    <scope>DISRUPTION PHENOTYPE</scope>
</reference>
<reference key="3">
    <citation type="journal article" date="2002" name="Cell">
        <title>A mechanism of regulating transmembrane potassium flux through a ligand-mediated conformational switch.</title>
        <authorList>
            <person name="Roosild T.P."/>
            <person name="Miller S."/>
            <person name="Booth I.R."/>
            <person name="Choe S."/>
        </authorList>
    </citation>
    <scope>X-RAY CRYSTALLOGRAPHY (2.85 ANGSTROMS) OF 1-142 IN COMPLEX WITH NAD</scope>
    <scope>SUBUNIT</scope>
</reference>
<reference key="4">
    <citation type="journal article" date="2006" name="Cell">
        <title>The RCK domain of the KtrAB K+ transporter: multiple conformations of an octameric ring.</title>
        <authorList>
            <person name="Albright R.A."/>
            <person name="Ibar J.-L.V."/>
            <person name="Kim C.U."/>
            <person name="Gruner S.M."/>
            <person name="Morais-Cabral J.H."/>
        </authorList>
    </citation>
    <scope>X-RAY CRYSTALLOGRAPHY (2.2 ANGSTROMS) OF 1-144 IN COMPLEX WITH NAD</scope>
    <scope>INTERACTION WITH KTRB</scope>
    <scope>SUBUNIT</scope>
</reference>
<feature type="chain" id="PRO_0000360619" description="Ktr system potassium uptake protein A">
    <location>
        <begin position="1"/>
        <end position="222"/>
    </location>
</feature>
<feature type="domain" description="RCK N-terminal" evidence="2">
    <location>
        <begin position="6"/>
        <end position="122"/>
    </location>
</feature>
<feature type="domain" description="RCK C-terminal" evidence="3">
    <location>
        <begin position="139"/>
        <end position="222"/>
    </location>
</feature>
<feature type="binding site" evidence="4 6">
    <location>
        <position position="16"/>
    </location>
    <ligand>
        <name>NAD(+)</name>
        <dbReference type="ChEBI" id="CHEBI:57540"/>
    </ligand>
</feature>
<feature type="binding site" evidence="4 6">
    <location>
        <begin position="36"/>
        <end position="38"/>
    </location>
    <ligand>
        <name>NAD(+)</name>
        <dbReference type="ChEBI" id="CHEBI:57540"/>
    </ligand>
</feature>
<feature type="binding site" evidence="4 6">
    <location>
        <begin position="56"/>
        <end position="57"/>
    </location>
    <ligand>
        <name>NAD(+)</name>
        <dbReference type="ChEBI" id="CHEBI:57540"/>
    </ligand>
</feature>
<feature type="binding site" evidence="4 6">
    <location>
        <begin position="78"/>
        <end position="80"/>
    </location>
    <ligand>
        <name>NAD(+)</name>
        <dbReference type="ChEBI" id="CHEBI:57540"/>
    </ligand>
</feature>
<feature type="binding site" evidence="4 6">
    <location>
        <begin position="103"/>
        <end position="105"/>
    </location>
    <ligand>
        <name>NAD(+)</name>
        <dbReference type="ChEBI" id="CHEBI:57540"/>
    </ligand>
</feature>
<feature type="binding site" evidence="4 6">
    <location>
        <position position="109"/>
    </location>
    <ligand>
        <name>NAD(+)</name>
        <dbReference type="ChEBI" id="CHEBI:57540"/>
    </ligand>
</feature>
<feature type="binding site" evidence="4 6">
    <location>
        <position position="125"/>
    </location>
    <ligand>
        <name>NAD(+)</name>
        <dbReference type="ChEBI" id="CHEBI:57540"/>
    </ligand>
</feature>
<feature type="strand" evidence="8">
    <location>
        <begin position="8"/>
        <end position="12"/>
    </location>
</feature>
<feature type="helix" evidence="8">
    <location>
        <begin position="16"/>
        <end position="27"/>
    </location>
</feature>
<feature type="strand" evidence="8">
    <location>
        <begin position="33"/>
        <end position="37"/>
    </location>
</feature>
<feature type="helix" evidence="8">
    <location>
        <begin position="39"/>
        <end position="43"/>
    </location>
</feature>
<feature type="turn" evidence="8">
    <location>
        <begin position="44"/>
        <end position="48"/>
    </location>
</feature>
<feature type="strand" evidence="8">
    <location>
        <begin position="50"/>
        <end position="54"/>
    </location>
</feature>
<feature type="helix" evidence="8">
    <location>
        <begin position="60"/>
        <end position="64"/>
    </location>
</feature>
<feature type="turn" evidence="8">
    <location>
        <begin position="65"/>
        <end position="67"/>
    </location>
</feature>
<feature type="helix" evidence="8">
    <location>
        <begin position="68"/>
        <end position="70"/>
    </location>
</feature>
<feature type="strand" evidence="8">
    <location>
        <begin position="72"/>
        <end position="76"/>
    </location>
</feature>
<feature type="helix" evidence="8">
    <location>
        <begin position="82"/>
        <end position="94"/>
    </location>
</feature>
<feature type="strand" evidence="8">
    <location>
        <begin position="98"/>
        <end position="103"/>
    </location>
</feature>
<feature type="helix" evidence="8">
    <location>
        <begin position="107"/>
        <end position="116"/>
    </location>
</feature>
<feature type="strand" evidence="8">
    <location>
        <begin position="119"/>
        <end position="122"/>
    </location>
</feature>
<feature type="helix" evidence="8">
    <location>
        <begin position="124"/>
        <end position="140"/>
    </location>
</feature>
<feature type="turn" evidence="9">
    <location>
        <begin position="141"/>
        <end position="143"/>
    </location>
</feature>
<feature type="strand" evidence="10">
    <location>
        <begin position="147"/>
        <end position="155"/>
    </location>
</feature>
<feature type="turn" evidence="10">
    <location>
        <begin position="161"/>
        <end position="164"/>
    </location>
</feature>
<feature type="turn" evidence="10">
    <location>
        <begin position="167"/>
        <end position="169"/>
    </location>
</feature>
<feature type="turn" evidence="10">
    <location>
        <begin position="173"/>
        <end position="176"/>
    </location>
</feature>
<feature type="strand" evidence="10">
    <location>
        <begin position="180"/>
        <end position="185"/>
    </location>
</feature>
<feature type="strand" evidence="10">
    <location>
        <begin position="188"/>
        <end position="192"/>
    </location>
</feature>
<feature type="strand" evidence="10">
    <location>
        <begin position="205"/>
        <end position="210"/>
    </location>
</feature>
<feature type="helix" evidence="10">
    <location>
        <begin position="211"/>
        <end position="216"/>
    </location>
</feature>
<dbReference type="EMBL" id="AL009126">
    <property type="protein sequence ID" value="CAB15087.1"/>
    <property type="molecule type" value="Genomic_DNA"/>
</dbReference>
<dbReference type="PIR" id="C70005">
    <property type="entry name" value="C70005"/>
</dbReference>
<dbReference type="RefSeq" id="NP_390987.1">
    <property type="nucleotide sequence ID" value="NC_000964.3"/>
</dbReference>
<dbReference type="RefSeq" id="WP_003243377.1">
    <property type="nucleotide sequence ID" value="NZ_OZ025638.1"/>
</dbReference>
<dbReference type="PDB" id="1LSU">
    <property type="method" value="X-ray"/>
    <property type="resolution" value="2.85 A"/>
    <property type="chains" value="A/B=1-143"/>
</dbReference>
<dbReference type="PDB" id="2HMS">
    <property type="method" value="X-ray"/>
    <property type="resolution" value="2.70 A"/>
    <property type="chains" value="A/B/C/D=1-144"/>
</dbReference>
<dbReference type="PDB" id="2HMT">
    <property type="method" value="X-ray"/>
    <property type="resolution" value="2.20 A"/>
    <property type="chains" value="A/B=1-144"/>
</dbReference>
<dbReference type="PDB" id="2HMU">
    <property type="method" value="X-ray"/>
    <property type="resolution" value="2.25 A"/>
    <property type="chains" value="A/B=1-144"/>
</dbReference>
<dbReference type="PDB" id="2HMV">
    <property type="method" value="X-ray"/>
    <property type="resolution" value="2.20 A"/>
    <property type="chains" value="A/B=1-144"/>
</dbReference>
<dbReference type="PDB" id="2HMW">
    <property type="method" value="X-ray"/>
    <property type="resolution" value="3.00 A"/>
    <property type="chains" value="A/B=1-144"/>
</dbReference>
<dbReference type="PDB" id="4J7C">
    <property type="method" value="X-ray"/>
    <property type="resolution" value="3.50 A"/>
    <property type="chains" value="A/B/C/D/E/F/G/H=1-222"/>
</dbReference>
<dbReference type="PDB" id="4J90">
    <property type="method" value="X-ray"/>
    <property type="resolution" value="3.24 A"/>
    <property type="chains" value="A/B=1-222"/>
</dbReference>
<dbReference type="PDB" id="4J91">
    <property type="method" value="X-ray"/>
    <property type="resolution" value="2.93 A"/>
    <property type="chains" value="A/B/C/D=1-222"/>
</dbReference>
<dbReference type="PDB" id="5BUT">
    <property type="method" value="X-ray"/>
    <property type="resolution" value="5.97 A"/>
    <property type="chains" value="A/C/E/G=1-212"/>
</dbReference>
<dbReference type="PDB" id="6S2J">
    <property type="method" value="X-ray"/>
    <property type="resolution" value="2.67 A"/>
    <property type="chains" value="A/B=1-222"/>
</dbReference>
<dbReference type="PDB" id="6S5B">
    <property type="method" value="X-ray"/>
    <property type="resolution" value="3.05 A"/>
    <property type="chains" value="A/B/C/D/E/F/G/H=1-222"/>
</dbReference>
<dbReference type="PDB" id="6S5C">
    <property type="method" value="X-ray"/>
    <property type="resolution" value="3.00 A"/>
    <property type="chains" value="A/B=1-222"/>
</dbReference>
<dbReference type="PDB" id="6S5D">
    <property type="method" value="X-ray"/>
    <property type="resolution" value="3.39 A"/>
    <property type="chains" value="A/B=1-222"/>
</dbReference>
<dbReference type="PDB" id="6S5E">
    <property type="method" value="X-ray"/>
    <property type="resolution" value="3.89 A"/>
    <property type="chains" value="A/B/C/D/E/F/G/H=1-222"/>
</dbReference>
<dbReference type="PDB" id="6S5G">
    <property type="method" value="X-ray"/>
    <property type="resolution" value="4.33 A"/>
    <property type="chains" value="A/B/C/D/E/F/G/H=1-222"/>
</dbReference>
<dbReference type="PDB" id="6S5N">
    <property type="method" value="X-ray"/>
    <property type="resolution" value="4.09 A"/>
    <property type="chains" value="A/B/C/D/E/F/G/H=1-222"/>
</dbReference>
<dbReference type="PDB" id="6S5O">
    <property type="method" value="X-ray"/>
    <property type="resolution" value="3.98 A"/>
    <property type="chains" value="A/B/C/D/E/F/G/H=1-222"/>
</dbReference>
<dbReference type="PDB" id="6S7R">
    <property type="method" value="X-ray"/>
    <property type="resolution" value="3.73 A"/>
    <property type="chains" value="A/B/C/D/E/F/G/H/I/J/K/L/M/N/O/P=1-222"/>
</dbReference>
<dbReference type="PDB" id="8K16">
    <property type="method" value="X-ray"/>
    <property type="resolution" value="3.10 A"/>
    <property type="chains" value="A/B=1-222"/>
</dbReference>
<dbReference type="PDB" id="8K1K">
    <property type="method" value="X-ray"/>
    <property type="resolution" value="3.00 A"/>
    <property type="chains" value="A/B=1-222"/>
</dbReference>
<dbReference type="PDB" id="8K1S">
    <property type="method" value="EM"/>
    <property type="resolution" value="2.83 A"/>
    <property type="chains" value="A/B/C/D/E/F/G/H=1-222"/>
</dbReference>
<dbReference type="PDB" id="8K1T">
    <property type="method" value="EM"/>
    <property type="resolution" value="2.48 A"/>
    <property type="chains" value="A/B/C/D/E/F/G/H=1-222"/>
</dbReference>
<dbReference type="PDB" id="8K1U">
    <property type="method" value="EM"/>
    <property type="resolution" value="2.82 A"/>
    <property type="chains" value="A/B/C/D/E/F/G/H=1-222"/>
</dbReference>
<dbReference type="PDB" id="8XMH">
    <property type="method" value="EM"/>
    <property type="resolution" value="2.85 A"/>
    <property type="chains" value="A/B/C/D/E/F/G/H=1-222"/>
</dbReference>
<dbReference type="PDB" id="8XMI">
    <property type="method" value="EM"/>
    <property type="resolution" value="3.00 A"/>
    <property type="chains" value="A/B/C/D/E/F/G/H=1-222"/>
</dbReference>
<dbReference type="PDBsum" id="1LSU"/>
<dbReference type="PDBsum" id="2HMS"/>
<dbReference type="PDBsum" id="2HMT"/>
<dbReference type="PDBsum" id="2HMU"/>
<dbReference type="PDBsum" id="2HMV"/>
<dbReference type="PDBsum" id="2HMW"/>
<dbReference type="PDBsum" id="4J7C"/>
<dbReference type="PDBsum" id="4J90"/>
<dbReference type="PDBsum" id="4J91"/>
<dbReference type="PDBsum" id="5BUT"/>
<dbReference type="PDBsum" id="6S2J"/>
<dbReference type="PDBsum" id="6S5B"/>
<dbReference type="PDBsum" id="6S5C"/>
<dbReference type="PDBsum" id="6S5D"/>
<dbReference type="PDBsum" id="6S5E"/>
<dbReference type="PDBsum" id="6S5G"/>
<dbReference type="PDBsum" id="6S5N"/>
<dbReference type="PDBsum" id="6S5O"/>
<dbReference type="PDBsum" id="6S7R"/>
<dbReference type="PDBsum" id="8K16"/>
<dbReference type="PDBsum" id="8K1K"/>
<dbReference type="PDBsum" id="8K1S"/>
<dbReference type="PDBsum" id="8K1T"/>
<dbReference type="PDBsum" id="8K1U"/>
<dbReference type="PDBsum" id="8XMH"/>
<dbReference type="PDBsum" id="8XMI"/>
<dbReference type="EMDB" id="EMD-36800"/>
<dbReference type="EMDB" id="EMD-36801"/>
<dbReference type="EMDB" id="EMD-36802"/>
<dbReference type="EMDB" id="EMD-36803"/>
<dbReference type="EMDB" id="EMD-36804"/>
<dbReference type="EMDB" id="EMD-38477"/>
<dbReference type="EMDB" id="EMD-38478"/>
<dbReference type="SMR" id="O32080"/>
<dbReference type="DIP" id="DIP-60209N"/>
<dbReference type="FunCoup" id="O32080">
    <property type="interactions" value="102"/>
</dbReference>
<dbReference type="IntAct" id="O32080">
    <property type="interactions" value="1"/>
</dbReference>
<dbReference type="STRING" id="224308.BSU31090"/>
<dbReference type="TCDB" id="2.A.38.4.3">
    <property type="family name" value="the k(+) transporter (trk) family"/>
</dbReference>
<dbReference type="PaxDb" id="224308-BSU31090"/>
<dbReference type="EnsemblBacteria" id="CAB15087">
    <property type="protein sequence ID" value="CAB15087"/>
    <property type="gene ID" value="BSU_31090"/>
</dbReference>
<dbReference type="GeneID" id="937145"/>
<dbReference type="KEGG" id="bsu:BSU31090"/>
<dbReference type="PATRIC" id="fig|224308.179.peg.3369"/>
<dbReference type="eggNOG" id="COG0569">
    <property type="taxonomic scope" value="Bacteria"/>
</dbReference>
<dbReference type="InParanoid" id="O32080"/>
<dbReference type="OrthoDB" id="9776294at2"/>
<dbReference type="PhylomeDB" id="O32080"/>
<dbReference type="BioCyc" id="BSUB:BSU31090-MONOMER"/>
<dbReference type="EvolutionaryTrace" id="O32080"/>
<dbReference type="Proteomes" id="UP000001570">
    <property type="component" value="Chromosome"/>
</dbReference>
<dbReference type="GO" id="GO:0005886">
    <property type="term" value="C:plasma membrane"/>
    <property type="evidence" value="ECO:0007669"/>
    <property type="project" value="UniProtKB-SubCell"/>
</dbReference>
<dbReference type="GO" id="GO:0042802">
    <property type="term" value="F:identical protein binding"/>
    <property type="evidence" value="ECO:0000353"/>
    <property type="project" value="IntAct"/>
</dbReference>
<dbReference type="GO" id="GO:0008324">
    <property type="term" value="F:monoatomic cation transmembrane transporter activity"/>
    <property type="evidence" value="ECO:0007669"/>
    <property type="project" value="InterPro"/>
</dbReference>
<dbReference type="GO" id="GO:0006813">
    <property type="term" value="P:potassium ion transport"/>
    <property type="evidence" value="ECO:0007669"/>
    <property type="project" value="UniProtKB-KW"/>
</dbReference>
<dbReference type="FunFam" id="3.40.50.720:FF:000745">
    <property type="entry name" value="Ktr system potassium uptake protein A"/>
    <property type="match status" value="1"/>
</dbReference>
<dbReference type="Gene3D" id="3.40.50.720">
    <property type="entry name" value="NAD(P)-binding Rossmann-like Domain"/>
    <property type="match status" value="1"/>
</dbReference>
<dbReference type="Gene3D" id="3.30.70.1450">
    <property type="entry name" value="Regulator of K+ conductance, C-terminal domain"/>
    <property type="match status" value="1"/>
</dbReference>
<dbReference type="InterPro" id="IPR036291">
    <property type="entry name" value="NAD(P)-bd_dom_sf"/>
</dbReference>
<dbReference type="InterPro" id="IPR006037">
    <property type="entry name" value="RCK_C"/>
</dbReference>
<dbReference type="InterPro" id="IPR036721">
    <property type="entry name" value="RCK_C_sf"/>
</dbReference>
<dbReference type="InterPro" id="IPR003148">
    <property type="entry name" value="RCK_N"/>
</dbReference>
<dbReference type="InterPro" id="IPR050721">
    <property type="entry name" value="Trk_Ktr_HKT_K-transport"/>
</dbReference>
<dbReference type="PANTHER" id="PTHR43833:SF7">
    <property type="entry name" value="KTR SYSTEM POTASSIUM UPTAKE PROTEIN C"/>
    <property type="match status" value="1"/>
</dbReference>
<dbReference type="PANTHER" id="PTHR43833">
    <property type="entry name" value="POTASSIUM CHANNEL PROTEIN 2-RELATED-RELATED"/>
    <property type="match status" value="1"/>
</dbReference>
<dbReference type="Pfam" id="PF02080">
    <property type="entry name" value="TrkA_C"/>
    <property type="match status" value="1"/>
</dbReference>
<dbReference type="Pfam" id="PF02254">
    <property type="entry name" value="TrkA_N"/>
    <property type="match status" value="1"/>
</dbReference>
<dbReference type="SUPFAM" id="SSF51735">
    <property type="entry name" value="NAD(P)-binding Rossmann-fold domains"/>
    <property type="match status" value="1"/>
</dbReference>
<dbReference type="SUPFAM" id="SSF116726">
    <property type="entry name" value="TrkA C-terminal domain-like"/>
    <property type="match status" value="1"/>
</dbReference>
<dbReference type="PROSITE" id="PS51202">
    <property type="entry name" value="RCK_C"/>
    <property type="match status" value="1"/>
</dbReference>
<dbReference type="PROSITE" id="PS51201">
    <property type="entry name" value="RCK_N"/>
    <property type="match status" value="1"/>
</dbReference>
<sequence length="222" mass="24882">MGRIKNKQFAVIGLGRFGGSICKELHRMGHEVLAVDINEEKVNAYASYATHAVIANATEENELLSLGIRNFEYVIVAIGANIQASTLTTLLLKELDIPNIWVKAQNYYHHKVLEKIGADRIIHPEKDMGVKIAQSLSDENVLNYIDLSDEYSIVELLATRKLDSKSIIDLNVRAKYGCTILAIKHHGDICLSPAPEDIIREQDCLVIMGHKKDIKRFENEGM</sequence>
<accession>O32080</accession>
<proteinExistence type="evidence at protein level"/>
<keyword id="KW-0002">3D-structure</keyword>
<keyword id="KW-1003">Cell membrane</keyword>
<keyword id="KW-0406">Ion transport</keyword>
<keyword id="KW-0472">Membrane</keyword>
<keyword id="KW-0520">NAD</keyword>
<keyword id="KW-0630">Potassium</keyword>
<keyword id="KW-0633">Potassium transport</keyword>
<keyword id="KW-1185">Reference proteome</keyword>
<keyword id="KW-0813">Transport</keyword>
<evidence type="ECO:0000250" key="1"/>
<evidence type="ECO:0000255" key="2">
    <source>
        <dbReference type="PROSITE-ProRule" id="PRU00543"/>
    </source>
</evidence>
<evidence type="ECO:0000255" key="3">
    <source>
        <dbReference type="PROSITE-ProRule" id="PRU00544"/>
    </source>
</evidence>
<evidence type="ECO:0000269" key="4">
    <source>
    </source>
</evidence>
<evidence type="ECO:0000269" key="5">
    <source>
    </source>
</evidence>
<evidence type="ECO:0000269" key="6">
    <source>
    </source>
</evidence>
<evidence type="ECO:0000305" key="7"/>
<evidence type="ECO:0007829" key="8">
    <source>
        <dbReference type="PDB" id="2HMT"/>
    </source>
</evidence>
<evidence type="ECO:0007829" key="9">
    <source>
        <dbReference type="PDB" id="2HMV"/>
    </source>
</evidence>
<evidence type="ECO:0007829" key="10">
    <source>
        <dbReference type="PDB" id="8K1T"/>
    </source>
</evidence>
<gene>
    <name type="primary">ktrA</name>
    <name type="synonym">yuaA</name>
    <name type="ordered locus">BSU31090</name>
</gene>
<name>KTRA_BACSU</name>
<organism>
    <name type="scientific">Bacillus subtilis (strain 168)</name>
    <dbReference type="NCBI Taxonomy" id="224308"/>
    <lineage>
        <taxon>Bacteria</taxon>
        <taxon>Bacillati</taxon>
        <taxon>Bacillota</taxon>
        <taxon>Bacilli</taxon>
        <taxon>Bacillales</taxon>
        <taxon>Bacillaceae</taxon>
        <taxon>Bacillus</taxon>
    </lineage>
</organism>
<comment type="function">
    <text evidence="5">Catalytic subunit of the KtrAB potassium uptake transporter. The 2 major potassium transporter complexes KtrAB and KtrCD confer resistance to both suddenly imposed and prolonged osmotic stress.</text>
</comment>
<comment type="subunit">
    <text evidence="4 6">Homodimer, tetramer (dimer of homodimer) and octamer (tetramer of homodimer). Part of the KtrAB complex formed by an octameric catalytic ring of KtrA and a membrane associated dimer of KtrB forming a potassium channel.</text>
</comment>
<comment type="interaction">
    <interactant intactId="EBI-16045427">
        <id>O32080</id>
    </interactant>
    <interactant intactId="EBI-16045427">
        <id>O32080</id>
        <label>ktrA</label>
    </interactant>
    <organismsDiffer>false</organismsDiffer>
    <experiments>2</experiments>
</comment>
<comment type="interaction">
    <interactant intactId="EBI-16045427">
        <id>O32080</id>
    </interactant>
    <interactant intactId="EBI-16045470">
        <id>O32081</id>
        <label>ktrB</label>
    </interactant>
    <organismsDiffer>false</organismsDiffer>
    <experiments>2</experiments>
</comment>
<comment type="subcellular location">
    <subcellularLocation>
        <location evidence="1">Cell membrane</location>
        <topology evidence="1">Peripheral membrane protein</topology>
        <orientation evidence="1">Cytoplasmic side</orientation>
    </subcellularLocation>
</comment>
<comment type="disruption phenotype">
    <text evidence="5">Impaired potassium uptake.</text>
</comment>
<comment type="similarity">
    <text evidence="7">Belongs to the KtrA potassium transport family.</text>
</comment>
<protein>
    <recommendedName>
        <fullName>Ktr system potassium uptake protein A</fullName>
        <shortName>K(+)-uptake protein KtrA</shortName>
    </recommendedName>
</protein>